<accession>Q9FZB1</accession>
<accession>F4IB72</accession>
<gene>
    <name type="ordered locus">At1g51880</name>
    <name type="ORF">T14L22.9</name>
</gene>
<feature type="signal peptide" evidence="2">
    <location>
        <begin position="1"/>
        <end position="23"/>
    </location>
</feature>
<feature type="chain" id="PRO_0000387531" description="Probable LRR receptor-like serine/threonine-protein kinase At1g51880">
    <location>
        <begin position="24"/>
        <end position="872"/>
    </location>
</feature>
<feature type="topological domain" description="Extracellular" evidence="2">
    <location>
        <begin position="24"/>
        <end position="513"/>
    </location>
</feature>
<feature type="transmembrane region" description="Helical" evidence="2">
    <location>
        <begin position="514"/>
        <end position="534"/>
    </location>
</feature>
<feature type="topological domain" description="Cytoplasmic" evidence="2">
    <location>
        <begin position="535"/>
        <end position="872"/>
    </location>
</feature>
<feature type="repeat" description="LRR 1">
    <location>
        <begin position="411"/>
        <end position="434"/>
    </location>
</feature>
<feature type="repeat" description="LRR 2">
    <location>
        <begin position="435"/>
        <end position="457"/>
    </location>
</feature>
<feature type="repeat" description="LRR 3">
    <location>
        <begin position="459"/>
        <end position="482"/>
    </location>
</feature>
<feature type="domain" description="Protein kinase" evidence="3">
    <location>
        <begin position="566"/>
        <end position="838"/>
    </location>
</feature>
<feature type="active site" description="Proton acceptor" evidence="3 4">
    <location>
        <position position="690"/>
    </location>
</feature>
<feature type="binding site" evidence="3">
    <location>
        <begin position="572"/>
        <end position="580"/>
    </location>
    <ligand>
        <name>ATP</name>
        <dbReference type="ChEBI" id="CHEBI:30616"/>
    </ligand>
</feature>
<feature type="binding site" evidence="3">
    <location>
        <position position="593"/>
    </location>
    <ligand>
        <name>ATP</name>
        <dbReference type="ChEBI" id="CHEBI:30616"/>
    </ligand>
</feature>
<feature type="modified residue" description="Phosphothreonine" evidence="1">
    <location>
        <position position="557"/>
    </location>
</feature>
<feature type="modified residue" description="Phosphotyrosine" evidence="1">
    <location>
        <position position="638"/>
    </location>
</feature>
<feature type="modified residue" description="Phosphoserine" evidence="1">
    <location>
        <position position="724"/>
    </location>
</feature>
<feature type="modified residue" description="Phosphothreonine" evidence="1">
    <location>
        <position position="725"/>
    </location>
</feature>
<feature type="modified residue" description="Phosphothreonine" evidence="1">
    <location>
        <position position="730"/>
    </location>
</feature>
<feature type="modified residue" description="Phosphotyrosine" evidence="1">
    <location>
        <position position="738"/>
    </location>
</feature>
<feature type="glycosylation site" description="N-linked (GlcNAc...) asparagine" evidence="2">
    <location>
        <position position="40"/>
    </location>
</feature>
<feature type="glycosylation site" description="N-linked (GlcNAc...) asparagine" evidence="2">
    <location>
        <position position="49"/>
    </location>
</feature>
<feature type="glycosylation site" description="N-linked (GlcNAc...) asparagine" evidence="2">
    <location>
        <position position="96"/>
    </location>
</feature>
<feature type="glycosylation site" description="N-linked (GlcNAc...) asparagine" evidence="2">
    <location>
        <position position="181"/>
    </location>
</feature>
<feature type="glycosylation site" description="N-linked (GlcNAc...) asparagine" evidence="2">
    <location>
        <position position="255"/>
    </location>
</feature>
<feature type="glycosylation site" description="N-linked (GlcNAc...) asparagine" evidence="2">
    <location>
        <position position="268"/>
    </location>
</feature>
<feature type="glycosylation site" description="N-linked (GlcNAc...) asparagine" evidence="2">
    <location>
        <position position="294"/>
    </location>
</feature>
<feature type="glycosylation site" description="N-linked (GlcNAc...) asparagine" evidence="2">
    <location>
        <position position="339"/>
    </location>
</feature>
<feature type="glycosylation site" description="N-linked (GlcNAc...) asparagine" evidence="2">
    <location>
        <position position="401"/>
    </location>
</feature>
<feature type="glycosylation site" description="N-linked (GlcNAc...) asparagine" evidence="2">
    <location>
        <position position="464"/>
    </location>
</feature>
<feature type="glycosylation site" description="N-linked (GlcNAc...) asparagine" evidence="2">
    <location>
        <position position="472"/>
    </location>
</feature>
<keyword id="KW-0067">ATP-binding</keyword>
<keyword id="KW-0325">Glycoprotein</keyword>
<keyword id="KW-0418">Kinase</keyword>
<keyword id="KW-0433">Leucine-rich repeat</keyword>
<keyword id="KW-0472">Membrane</keyword>
<keyword id="KW-0547">Nucleotide-binding</keyword>
<keyword id="KW-0597">Phosphoprotein</keyword>
<keyword id="KW-0675">Receptor</keyword>
<keyword id="KW-1185">Reference proteome</keyword>
<keyword id="KW-0677">Repeat</keyword>
<keyword id="KW-0723">Serine/threonine-protein kinase</keyword>
<keyword id="KW-0732">Signal</keyword>
<keyword id="KW-0808">Transferase</keyword>
<keyword id="KW-0812">Transmembrane</keyword>
<keyword id="KW-1133">Transmembrane helix</keyword>
<evidence type="ECO:0000250" key="1">
    <source>
        <dbReference type="UniProtKB" id="O48814"/>
    </source>
</evidence>
<evidence type="ECO:0000255" key="2"/>
<evidence type="ECO:0000255" key="3">
    <source>
        <dbReference type="PROSITE-ProRule" id="PRU00159"/>
    </source>
</evidence>
<evidence type="ECO:0000255" key="4">
    <source>
        <dbReference type="PROSITE-ProRule" id="PRU10027"/>
    </source>
</evidence>
<evidence type="ECO:0000305" key="5"/>
<comment type="catalytic activity">
    <reaction>
        <text>L-seryl-[protein] + ATP = O-phospho-L-seryl-[protein] + ADP + H(+)</text>
        <dbReference type="Rhea" id="RHEA:17989"/>
        <dbReference type="Rhea" id="RHEA-COMP:9863"/>
        <dbReference type="Rhea" id="RHEA-COMP:11604"/>
        <dbReference type="ChEBI" id="CHEBI:15378"/>
        <dbReference type="ChEBI" id="CHEBI:29999"/>
        <dbReference type="ChEBI" id="CHEBI:30616"/>
        <dbReference type="ChEBI" id="CHEBI:83421"/>
        <dbReference type="ChEBI" id="CHEBI:456216"/>
        <dbReference type="EC" id="2.7.11.1"/>
    </reaction>
</comment>
<comment type="catalytic activity">
    <reaction>
        <text>L-threonyl-[protein] + ATP = O-phospho-L-threonyl-[protein] + ADP + H(+)</text>
        <dbReference type="Rhea" id="RHEA:46608"/>
        <dbReference type="Rhea" id="RHEA-COMP:11060"/>
        <dbReference type="Rhea" id="RHEA-COMP:11605"/>
        <dbReference type="ChEBI" id="CHEBI:15378"/>
        <dbReference type="ChEBI" id="CHEBI:30013"/>
        <dbReference type="ChEBI" id="CHEBI:30616"/>
        <dbReference type="ChEBI" id="CHEBI:61977"/>
        <dbReference type="ChEBI" id="CHEBI:456216"/>
        <dbReference type="EC" id="2.7.11.1"/>
    </reaction>
</comment>
<comment type="subcellular location">
    <subcellularLocation>
        <location evidence="5">Membrane</location>
        <topology evidence="5">Single-pass type I membrane protein</topology>
    </subcellularLocation>
</comment>
<comment type="similarity">
    <text evidence="3">Belongs to the protein kinase superfamily. Ser/Thr protein kinase family.</text>
</comment>
<organism>
    <name type="scientific">Arabidopsis thaliana</name>
    <name type="common">Mouse-ear cress</name>
    <dbReference type="NCBI Taxonomy" id="3702"/>
    <lineage>
        <taxon>Eukaryota</taxon>
        <taxon>Viridiplantae</taxon>
        <taxon>Streptophyta</taxon>
        <taxon>Embryophyta</taxon>
        <taxon>Tracheophyta</taxon>
        <taxon>Spermatophyta</taxon>
        <taxon>Magnoliopsida</taxon>
        <taxon>eudicotyledons</taxon>
        <taxon>Gunneridae</taxon>
        <taxon>Pentapetalae</taxon>
        <taxon>rosids</taxon>
        <taxon>malvids</taxon>
        <taxon>Brassicales</taxon>
        <taxon>Brassicaceae</taxon>
        <taxon>Camelineae</taxon>
        <taxon>Arabidopsis</taxon>
    </lineage>
</organism>
<sequence length="872" mass="97284">MKSIHGFLLFLITAYVILESVQAQDQLGFISLDCGLVPKNATYTEKTTNITYKSDANYIDSGLVGRISAEYKAQLQQQTWTVRSFPEGERNCYNFNLTAKSRYLIRATFTYGNYDGLRQVPKFDIHIGPSKWTSVKLDGVGNGAVLEMIHVLTQDRLQICLVKTGKGIPFISSLELRPLNNNTYLTQSGSLIGFARVFFSATPTFIRYDEDIHDRVWVRQFGNGLKSISTDLLVDTSNPYDVPQAVAKTACVPSNASQPLIFDWTLDNITSQSYVYMHFAEIQTLKDNDIREFNITYNGGQNVYSYLRPEKFEISTLFDSKPLSSPDGSFSLSFTKTGNSTLPPLINGLEIYKVLDLLELETDQDEVSAMINIKATYDLSKKVSWQGDPCAPKSYQWEGLNCSYPNSDQPRIISLNLAENKLTGTITPEISKLTQLIELDLSKNDLSGEIPEFFADMKLLKLINLSGNLGLNSTIPDSIQQRLDSKSLILILSKTVTKTVTLKGKSKKVPMIPIVASVAGVFALLVILAIFFVVRRKNGESNKGTNPSIITKERRITYPEVLKMTNNFERVLGKGGFGTVYHGNLEDTQVAVKMLSHSSAQGYKEFKAEVELLLRVHHRNLVGLVGYCDDGDNLALIYEYMANGDLKENMSGKRGGNVLTWENRMQIAVEAAQGLEYLHNGCTPPMVHRDVKTTNILLNERYGAKLADFGLSRSFPVDGESHVSTVVAGTPGYLDPEYYRTNWLSEKSDVYSFGVVLLEIVTNQPVTDKTRERTHINEWVGSMLTKGDIKSILDPKLMGDYDTNGAWKIVELALACVNPSSNRRPTMAHVVTELNECVALENARRQGREEMHTSGYVDFSRSSASEFSPGAR</sequence>
<dbReference type="EC" id="2.7.11.1"/>
<dbReference type="EMBL" id="AC015448">
    <property type="protein sequence ID" value="AAF99858.1"/>
    <property type="molecule type" value="Genomic_DNA"/>
</dbReference>
<dbReference type="EMBL" id="CP002684">
    <property type="protein sequence ID" value="AEE32728.2"/>
    <property type="molecule type" value="Genomic_DNA"/>
</dbReference>
<dbReference type="EMBL" id="FJ708654">
    <property type="protein sequence ID" value="ACN59250.1"/>
    <property type="molecule type" value="mRNA"/>
</dbReference>
<dbReference type="PIR" id="C96558">
    <property type="entry name" value="C96558"/>
</dbReference>
<dbReference type="RefSeq" id="NP_001319201.1">
    <property type="nucleotide sequence ID" value="NM_001333514.1"/>
</dbReference>
<dbReference type="SMR" id="Q9FZB1"/>
<dbReference type="BioGRID" id="26840">
    <property type="interactions" value="22"/>
</dbReference>
<dbReference type="IntAct" id="Q9FZB1">
    <property type="interactions" value="22"/>
</dbReference>
<dbReference type="STRING" id="3702.Q9FZB1"/>
<dbReference type="GlyGen" id="Q9FZB1">
    <property type="glycosylation" value="12 sites"/>
</dbReference>
<dbReference type="iPTMnet" id="Q9FZB1"/>
<dbReference type="PaxDb" id="3702-AT1G51880.1"/>
<dbReference type="EnsemblPlants" id="AT1G51880.1">
    <property type="protein sequence ID" value="AT1G51880.1"/>
    <property type="gene ID" value="AT1G51880"/>
</dbReference>
<dbReference type="GeneID" id="841615"/>
<dbReference type="Gramene" id="AT1G51880.1">
    <property type="protein sequence ID" value="AT1G51880.1"/>
    <property type="gene ID" value="AT1G51880"/>
</dbReference>
<dbReference type="KEGG" id="ath:AT1G51880"/>
<dbReference type="Araport" id="AT1G51880"/>
<dbReference type="TAIR" id="AT1G51880">
    <property type="gene designation" value="RHS6"/>
</dbReference>
<dbReference type="HOGENOM" id="CLU_000288_41_1_1"/>
<dbReference type="InParanoid" id="Q9FZB1"/>
<dbReference type="PhylomeDB" id="Q9FZB1"/>
<dbReference type="PRO" id="PR:Q9FZB1"/>
<dbReference type="Proteomes" id="UP000006548">
    <property type="component" value="Chromosome 1"/>
</dbReference>
<dbReference type="ExpressionAtlas" id="Q9FZB1">
    <property type="expression patterns" value="baseline and differential"/>
</dbReference>
<dbReference type="GO" id="GO:0016020">
    <property type="term" value="C:membrane"/>
    <property type="evidence" value="ECO:0007669"/>
    <property type="project" value="UniProtKB-SubCell"/>
</dbReference>
<dbReference type="GO" id="GO:0005524">
    <property type="term" value="F:ATP binding"/>
    <property type="evidence" value="ECO:0007669"/>
    <property type="project" value="UniProtKB-KW"/>
</dbReference>
<dbReference type="GO" id="GO:0106310">
    <property type="term" value="F:protein serine kinase activity"/>
    <property type="evidence" value="ECO:0007669"/>
    <property type="project" value="RHEA"/>
</dbReference>
<dbReference type="GO" id="GO:0004674">
    <property type="term" value="F:protein serine/threonine kinase activity"/>
    <property type="evidence" value="ECO:0007669"/>
    <property type="project" value="UniProtKB-KW"/>
</dbReference>
<dbReference type="CDD" id="cd14066">
    <property type="entry name" value="STKc_IRAK"/>
    <property type="match status" value="1"/>
</dbReference>
<dbReference type="FunFam" id="3.80.10.10:FF:000129">
    <property type="entry name" value="Leucine-rich repeat receptor-like kinase"/>
    <property type="match status" value="1"/>
</dbReference>
<dbReference type="FunFam" id="3.30.200.20:FF:000394">
    <property type="entry name" value="Leucine-rich repeat receptor-like protein kinase"/>
    <property type="match status" value="1"/>
</dbReference>
<dbReference type="FunFam" id="1.10.510.10:FF:000146">
    <property type="entry name" value="LRR receptor-like serine/threonine-protein kinase IOS1"/>
    <property type="match status" value="1"/>
</dbReference>
<dbReference type="Gene3D" id="3.30.200.20">
    <property type="entry name" value="Phosphorylase Kinase, domain 1"/>
    <property type="match status" value="1"/>
</dbReference>
<dbReference type="Gene3D" id="3.80.10.10">
    <property type="entry name" value="Ribonuclease Inhibitor"/>
    <property type="match status" value="1"/>
</dbReference>
<dbReference type="Gene3D" id="1.10.510.10">
    <property type="entry name" value="Transferase(Phosphotransferase) domain 1"/>
    <property type="match status" value="1"/>
</dbReference>
<dbReference type="InterPro" id="IPR011009">
    <property type="entry name" value="Kinase-like_dom_sf"/>
</dbReference>
<dbReference type="InterPro" id="IPR001611">
    <property type="entry name" value="Leu-rich_rpt"/>
</dbReference>
<dbReference type="InterPro" id="IPR032675">
    <property type="entry name" value="LRR_dom_sf"/>
</dbReference>
<dbReference type="InterPro" id="IPR024788">
    <property type="entry name" value="Malectin-like_Carb-bd_dom"/>
</dbReference>
<dbReference type="InterPro" id="IPR000719">
    <property type="entry name" value="Prot_kinase_dom"/>
</dbReference>
<dbReference type="InterPro" id="IPR017441">
    <property type="entry name" value="Protein_kinase_ATP_BS"/>
</dbReference>
<dbReference type="InterPro" id="IPR001245">
    <property type="entry name" value="Ser-Thr/Tyr_kinase_cat_dom"/>
</dbReference>
<dbReference type="InterPro" id="IPR008271">
    <property type="entry name" value="Ser/Thr_kinase_AS"/>
</dbReference>
<dbReference type="PANTHER" id="PTHR45631">
    <property type="entry name" value="OS07G0107800 PROTEIN-RELATED"/>
    <property type="match status" value="1"/>
</dbReference>
<dbReference type="PANTHER" id="PTHR45631:SF33">
    <property type="entry name" value="PROTEIN KINASE DOMAIN-CONTAINING PROTEIN"/>
    <property type="match status" value="1"/>
</dbReference>
<dbReference type="Pfam" id="PF00560">
    <property type="entry name" value="LRR_1"/>
    <property type="match status" value="1"/>
</dbReference>
<dbReference type="Pfam" id="PF12819">
    <property type="entry name" value="Malectin_like"/>
    <property type="match status" value="1"/>
</dbReference>
<dbReference type="Pfam" id="PF07714">
    <property type="entry name" value="PK_Tyr_Ser-Thr"/>
    <property type="match status" value="1"/>
</dbReference>
<dbReference type="SMART" id="SM00220">
    <property type="entry name" value="S_TKc"/>
    <property type="match status" value="1"/>
</dbReference>
<dbReference type="SUPFAM" id="SSF52058">
    <property type="entry name" value="L domain-like"/>
    <property type="match status" value="1"/>
</dbReference>
<dbReference type="SUPFAM" id="SSF56112">
    <property type="entry name" value="Protein kinase-like (PK-like)"/>
    <property type="match status" value="1"/>
</dbReference>
<dbReference type="PROSITE" id="PS00107">
    <property type="entry name" value="PROTEIN_KINASE_ATP"/>
    <property type="match status" value="1"/>
</dbReference>
<dbReference type="PROSITE" id="PS50011">
    <property type="entry name" value="PROTEIN_KINASE_DOM"/>
    <property type="match status" value="1"/>
</dbReference>
<dbReference type="PROSITE" id="PS00108">
    <property type="entry name" value="PROTEIN_KINASE_ST"/>
    <property type="match status" value="1"/>
</dbReference>
<proteinExistence type="evidence at transcript level"/>
<reference key="1">
    <citation type="journal article" date="2000" name="Nature">
        <title>Sequence and analysis of chromosome 1 of the plant Arabidopsis thaliana.</title>
        <authorList>
            <person name="Theologis A."/>
            <person name="Ecker J.R."/>
            <person name="Palm C.J."/>
            <person name="Federspiel N.A."/>
            <person name="Kaul S."/>
            <person name="White O."/>
            <person name="Alonso J."/>
            <person name="Altafi H."/>
            <person name="Araujo R."/>
            <person name="Bowman C.L."/>
            <person name="Brooks S.Y."/>
            <person name="Buehler E."/>
            <person name="Chan A."/>
            <person name="Chao Q."/>
            <person name="Chen H."/>
            <person name="Cheuk R.F."/>
            <person name="Chin C.W."/>
            <person name="Chung M.K."/>
            <person name="Conn L."/>
            <person name="Conway A.B."/>
            <person name="Conway A.R."/>
            <person name="Creasy T.H."/>
            <person name="Dewar K."/>
            <person name="Dunn P."/>
            <person name="Etgu P."/>
            <person name="Feldblyum T.V."/>
            <person name="Feng J.-D."/>
            <person name="Fong B."/>
            <person name="Fujii C.Y."/>
            <person name="Gill J.E."/>
            <person name="Goldsmith A.D."/>
            <person name="Haas B."/>
            <person name="Hansen N.F."/>
            <person name="Hughes B."/>
            <person name="Huizar L."/>
            <person name="Hunter J.L."/>
            <person name="Jenkins J."/>
            <person name="Johnson-Hopson C."/>
            <person name="Khan S."/>
            <person name="Khaykin E."/>
            <person name="Kim C.J."/>
            <person name="Koo H.L."/>
            <person name="Kremenetskaia I."/>
            <person name="Kurtz D.B."/>
            <person name="Kwan A."/>
            <person name="Lam B."/>
            <person name="Langin-Hooper S."/>
            <person name="Lee A."/>
            <person name="Lee J.M."/>
            <person name="Lenz C.A."/>
            <person name="Li J.H."/>
            <person name="Li Y.-P."/>
            <person name="Lin X."/>
            <person name="Liu S.X."/>
            <person name="Liu Z.A."/>
            <person name="Luros J.S."/>
            <person name="Maiti R."/>
            <person name="Marziali A."/>
            <person name="Militscher J."/>
            <person name="Miranda M."/>
            <person name="Nguyen M."/>
            <person name="Nierman W.C."/>
            <person name="Osborne B.I."/>
            <person name="Pai G."/>
            <person name="Peterson J."/>
            <person name="Pham P.K."/>
            <person name="Rizzo M."/>
            <person name="Rooney T."/>
            <person name="Rowley D."/>
            <person name="Sakano H."/>
            <person name="Salzberg S.L."/>
            <person name="Schwartz J.R."/>
            <person name="Shinn P."/>
            <person name="Southwick A.M."/>
            <person name="Sun H."/>
            <person name="Tallon L.J."/>
            <person name="Tambunga G."/>
            <person name="Toriumi M.J."/>
            <person name="Town C.D."/>
            <person name="Utterback T."/>
            <person name="Van Aken S."/>
            <person name="Vaysberg M."/>
            <person name="Vysotskaia V.S."/>
            <person name="Walker M."/>
            <person name="Wu D."/>
            <person name="Yu G."/>
            <person name="Fraser C.M."/>
            <person name="Venter J.C."/>
            <person name="Davis R.W."/>
        </authorList>
    </citation>
    <scope>NUCLEOTIDE SEQUENCE [LARGE SCALE GENOMIC DNA]</scope>
    <source>
        <strain>cv. Columbia</strain>
    </source>
</reference>
<reference key="2">
    <citation type="journal article" date="2017" name="Plant J.">
        <title>Araport11: a complete reannotation of the Arabidopsis thaliana reference genome.</title>
        <authorList>
            <person name="Cheng C.Y."/>
            <person name="Krishnakumar V."/>
            <person name="Chan A.P."/>
            <person name="Thibaud-Nissen F."/>
            <person name="Schobel S."/>
            <person name="Town C.D."/>
        </authorList>
    </citation>
    <scope>GENOME REANNOTATION</scope>
    <source>
        <strain>cv. Columbia</strain>
    </source>
</reference>
<reference key="3">
    <citation type="journal article" date="2010" name="BMC Genomics">
        <title>Genome-wide cloning and sequence analysis of leucine-rich repeat receptor-like protein kinase genes in Arabidopsis thaliana.</title>
        <authorList>
            <person name="Gou X."/>
            <person name="He K."/>
            <person name="Yang H."/>
            <person name="Yuan T."/>
            <person name="Lin H."/>
            <person name="Clouse S.D."/>
            <person name="Li J."/>
        </authorList>
    </citation>
    <scope>NUCLEOTIDE SEQUENCE [LARGE SCALE MRNA]</scope>
    <source>
        <strain>cv. Columbia</strain>
    </source>
</reference>
<name>Y5188_ARATH</name>
<protein>
    <recommendedName>
        <fullName>Probable LRR receptor-like serine/threonine-protein kinase At1g51880</fullName>
        <ecNumber>2.7.11.1</ecNumber>
    </recommendedName>
</protein>